<feature type="chain" id="PRO_0000221948" description="Protein MGF 360-3L">
    <location>
        <begin position="1"/>
        <end position="356"/>
    </location>
</feature>
<feature type="repeat" description="ANK">
    <location>
        <begin position="61"/>
        <end position="93"/>
    </location>
</feature>
<gene>
    <name type="ordered locus">BA71V-007</name>
    <name type="ORF">L356L</name>
</gene>
<organism>
    <name type="scientific">African swine fever virus (strain Badajoz 1971 Vero-adapted)</name>
    <name type="common">Ba71V</name>
    <name type="synonym">ASFV</name>
    <dbReference type="NCBI Taxonomy" id="10498"/>
    <lineage>
        <taxon>Viruses</taxon>
        <taxon>Varidnaviria</taxon>
        <taxon>Bamfordvirae</taxon>
        <taxon>Nucleocytoviricota</taxon>
        <taxon>Pokkesviricetes</taxon>
        <taxon>Asfuvirales</taxon>
        <taxon>Asfarviridae</taxon>
        <taxon>Asfivirus</taxon>
        <taxon>African swine fever virus</taxon>
    </lineage>
</organism>
<protein>
    <recommendedName>
        <fullName>Protein MGF 360-3L</fullName>
    </recommendedName>
</protein>
<keyword id="KW-0040">ANK repeat</keyword>
<keyword id="KW-1185">Reference proteome</keyword>
<comment type="function">
    <text evidence="1">Plays a role in virus cell tropism, and may be required for efficient virus replication in macrophages.</text>
</comment>
<comment type="similarity">
    <text evidence="2">Belongs to the asfivirus MGF 360 family.</text>
</comment>
<evidence type="ECO:0000269" key="1">
    <source>
    </source>
</evidence>
<evidence type="ECO:0000305" key="2"/>
<sequence length="356" mass="41697">MQPSTLQALAKRALATQHVSKDDYYILERCGLWWHEAPISIYIDDDNQIMIRTLCFKEGIKLNTALVLAVKENNEDLIMLFTEWGANINYGLLFINNEHTRNLCRKLGAKEELETSEILRFFFETKCKITSSNVILCHELFSNNPFLQNVNMVDLRMIIYWELKDLPTNSMLNEISFSEMLTKYWYGIAVKYNLKEAIQYFCQEYRHFDEWRLICALSFNNVFDLHEICNTTKIHMSINKMMELACMRDNNFLTIYYCFALGANANRAMLISVKNFCIENMFFCMDLGANVIEHSKTLADIYGYSIIVNILSLKIYKANPILLSKETNPEKINTLLKNYYSKNMLAYDICCIDNYL</sequence>
<proteinExistence type="inferred from homology"/>
<dbReference type="EMBL" id="M57546">
    <property type="protein sequence ID" value="AAA42680.1"/>
    <property type="molecule type" value="Genomic_DNA"/>
</dbReference>
<dbReference type="EMBL" id="U18466">
    <property type="protein sequence ID" value="AAA65242.1"/>
    <property type="molecule type" value="Genomic_DNA"/>
</dbReference>
<dbReference type="PIR" id="A43680">
    <property type="entry name" value="A43680"/>
</dbReference>
<dbReference type="RefSeq" id="NP_042706.1">
    <property type="nucleotide sequence ID" value="NC_001659.2"/>
</dbReference>
<dbReference type="GeneID" id="22220389"/>
<dbReference type="KEGG" id="vg:22220389"/>
<dbReference type="Proteomes" id="UP000000624">
    <property type="component" value="Segment"/>
</dbReference>
<dbReference type="GO" id="GO:0042330">
    <property type="term" value="P:taxis"/>
    <property type="evidence" value="ECO:0007669"/>
    <property type="project" value="InterPro"/>
</dbReference>
<dbReference type="InterPro" id="IPR002595">
    <property type="entry name" value="ASFV_MGF360"/>
</dbReference>
<dbReference type="Pfam" id="PF01671">
    <property type="entry name" value="ASFV_360"/>
    <property type="match status" value="1"/>
</dbReference>
<reference key="1">
    <citation type="journal article" date="1990" name="J. Virol.">
        <title>Multigene families in African swine fever virus: family 360.</title>
        <authorList>
            <person name="Gonzalez A."/>
            <person name="Calvo V."/>
            <person name="Almazan F."/>
            <person name="Almendral J.M."/>
            <person name="Ramirez J.C."/>
            <person name="de la Vega I."/>
            <person name="Blasco R."/>
            <person name="Vinuela E."/>
        </authorList>
    </citation>
    <scope>NUCLEOTIDE SEQUENCE [GENOMIC DNA]</scope>
</reference>
<reference key="2">
    <citation type="journal article" date="1995" name="Virology">
        <title>Analysis of the complete nucleotide sequence of African swine fever virus.</title>
        <authorList>
            <person name="Yanez R.J."/>
            <person name="Rodriguez J.M."/>
            <person name="Nogal M.L."/>
            <person name="Yuste L."/>
            <person name="Enriquez C."/>
            <person name="Rodriguez J.F."/>
            <person name="Vinuela E."/>
        </authorList>
    </citation>
    <scope>NUCLEOTIDE SEQUENCE [LARGE SCALE GENOMIC DNA]</scope>
</reference>
<reference key="3">
    <citation type="journal article" date="2001" name="J. Virol.">
        <title>African swine fever virus multigene family 360 and 530 genes are novel macrophage host range determinants.</title>
        <authorList>
            <person name="Zsak L."/>
            <person name="Lu Z."/>
            <person name="Burrage T.G."/>
            <person name="Neilan J.G."/>
            <person name="Kutish G.F."/>
            <person name="Moore D.M."/>
            <person name="Rock D.L."/>
        </authorList>
    </citation>
    <scope>FUNCTION</scope>
</reference>
<accession>P23165</accession>
<name>3603L_ASFB7</name>
<organismHost>
    <name type="scientific">Ornithodoros</name>
    <name type="common">relapsing fever ticks</name>
    <dbReference type="NCBI Taxonomy" id="6937"/>
</organismHost>
<organismHost>
    <name type="scientific">Sus scrofa</name>
    <name type="common">Pig</name>
    <dbReference type="NCBI Taxonomy" id="9823"/>
</organismHost>